<keyword id="KW-0963">Cytoplasm</keyword>
<keyword id="KW-0274">FAD</keyword>
<keyword id="KW-0285">Flavoprotein</keyword>
<keyword id="KW-0560">Oxidoreductase</keyword>
<keyword id="KW-1185">Reference proteome</keyword>
<evidence type="ECO:0000250" key="1"/>
<evidence type="ECO:0000255" key="2"/>
<evidence type="ECO:0000256" key="3">
    <source>
        <dbReference type="SAM" id="MobiDB-lite"/>
    </source>
</evidence>
<evidence type="ECO:0000269" key="4">
    <source>
    </source>
</evidence>
<evidence type="ECO:0000305" key="5"/>
<reference key="1">
    <citation type="journal article" date="2001" name="Nature">
        <title>Genome sequence and gene compaction of the eukaryote parasite Encephalitozoon cuniculi.</title>
        <authorList>
            <person name="Katinka M.D."/>
            <person name="Duprat S."/>
            <person name="Cornillot E."/>
            <person name="Metenier G."/>
            <person name="Thomarat F."/>
            <person name="Prensier G."/>
            <person name="Barbe V."/>
            <person name="Peyretaillade E."/>
            <person name="Brottier P."/>
            <person name="Wincker P."/>
            <person name="Delbac F."/>
            <person name="El Alaoui H."/>
            <person name="Peyret P."/>
            <person name="Saurin W."/>
            <person name="Gouy M."/>
            <person name="Weissenbach J."/>
            <person name="Vivares C.P."/>
        </authorList>
    </citation>
    <scope>NUCLEOTIDE SEQUENCE [LARGE SCALE GENOMIC DNA]</scope>
    <source>
        <strain>GB-M1</strain>
    </source>
</reference>
<reference key="2">
    <citation type="journal article" date="2008" name="J. Eukaryot. Microbiol.">
        <title>Distinct localization patterns of two putative mitochondrial proteins in the microsporidian Encephalitozoon cuniculi.</title>
        <authorList>
            <person name="Williams B.A.P."/>
            <person name="Cali A."/>
            <person name="Takvorian P.M."/>
            <person name="Keeling P.J."/>
        </authorList>
    </citation>
    <scope>SUBCELLULAR LOCATION</scope>
</reference>
<name>GPDH_ENCCU</name>
<accession>Q8SR40</accession>
<proteinExistence type="inferred from homology"/>
<protein>
    <recommendedName>
        <fullName>Probable glycerol-3-phosphate dehydrogenase</fullName>
        <shortName>GPDH</shortName>
        <ecNumber>1.1.5.3</ecNumber>
    </recommendedName>
</protein>
<organism>
    <name type="scientific">Encephalitozoon cuniculi (strain GB-M1)</name>
    <name type="common">Microsporidian parasite</name>
    <dbReference type="NCBI Taxonomy" id="284813"/>
    <lineage>
        <taxon>Eukaryota</taxon>
        <taxon>Fungi</taxon>
        <taxon>Fungi incertae sedis</taxon>
        <taxon>Microsporidia</taxon>
        <taxon>Unikaryonidae</taxon>
        <taxon>Encephalitozoon</taxon>
    </lineage>
</organism>
<comment type="catalytic activity">
    <reaction>
        <text>a quinone + sn-glycerol 3-phosphate = dihydroxyacetone phosphate + a quinol</text>
        <dbReference type="Rhea" id="RHEA:18977"/>
        <dbReference type="ChEBI" id="CHEBI:24646"/>
        <dbReference type="ChEBI" id="CHEBI:57597"/>
        <dbReference type="ChEBI" id="CHEBI:57642"/>
        <dbReference type="ChEBI" id="CHEBI:132124"/>
        <dbReference type="EC" id="1.1.5.3"/>
    </reaction>
</comment>
<comment type="cofactor">
    <cofactor evidence="1">
        <name>FAD</name>
        <dbReference type="ChEBI" id="CHEBI:57692"/>
    </cofactor>
</comment>
<comment type="pathway">
    <text>Polyol metabolism; glycerol degradation via glycerol kinase pathway; glycerone phosphate from sn-glycerol 3-phosphate (anaerobic route): step 1/1.</text>
</comment>
<comment type="subcellular location">
    <subcellularLocation>
        <location evidence="4">Cytoplasm</location>
    </subcellularLocation>
</comment>
<comment type="similarity">
    <text evidence="5">Belongs to the FAD-dependent glycerol-3-phosphate dehydrogenase family.</text>
</comment>
<dbReference type="EC" id="1.1.5.3"/>
<dbReference type="EMBL" id="AL590449">
    <property type="protein sequence ID" value="CAD25806.1"/>
    <property type="molecule type" value="Genomic_DNA"/>
</dbReference>
<dbReference type="RefSeq" id="NP_586202.1">
    <property type="nucleotide sequence ID" value="NM_001042035.1"/>
</dbReference>
<dbReference type="SMR" id="Q8SR40"/>
<dbReference type="FunCoup" id="Q8SR40">
    <property type="interactions" value="59"/>
</dbReference>
<dbReference type="STRING" id="284813.Q8SR40"/>
<dbReference type="GeneID" id="859851"/>
<dbReference type="KEGG" id="ecu:ECU10_0870"/>
<dbReference type="VEuPathDB" id="MicrosporidiaDB:ECU10_0870"/>
<dbReference type="HOGENOM" id="CLU_015740_4_1_1"/>
<dbReference type="InParanoid" id="Q8SR40"/>
<dbReference type="OMA" id="PHIVKPM"/>
<dbReference type="OrthoDB" id="264015at2759"/>
<dbReference type="UniPathway" id="UPA00618">
    <property type="reaction ID" value="UER00673"/>
</dbReference>
<dbReference type="Proteomes" id="UP000000819">
    <property type="component" value="Chromosome X"/>
</dbReference>
<dbReference type="GO" id="GO:0005739">
    <property type="term" value="C:mitochondrion"/>
    <property type="evidence" value="ECO:0007669"/>
    <property type="project" value="TreeGrafter"/>
</dbReference>
<dbReference type="GO" id="GO:0004368">
    <property type="term" value="F:glycerol-3-phosphate dehydrogenase (quinone) activity"/>
    <property type="evidence" value="ECO:0007669"/>
    <property type="project" value="UniProtKB-EC"/>
</dbReference>
<dbReference type="GO" id="GO:0019563">
    <property type="term" value="P:glycerol catabolic process"/>
    <property type="evidence" value="ECO:0007669"/>
    <property type="project" value="UniProtKB-UniPathway"/>
</dbReference>
<dbReference type="GO" id="GO:0006072">
    <property type="term" value="P:glycerol-3-phosphate metabolic process"/>
    <property type="evidence" value="ECO:0007669"/>
    <property type="project" value="InterPro"/>
</dbReference>
<dbReference type="GO" id="GO:0006734">
    <property type="term" value="P:NADH metabolic process"/>
    <property type="evidence" value="ECO:0007669"/>
    <property type="project" value="UniProtKB-ARBA"/>
</dbReference>
<dbReference type="Gene3D" id="1.10.8.870">
    <property type="entry name" value="Alpha-glycerophosphate oxidase, cap domain"/>
    <property type="match status" value="1"/>
</dbReference>
<dbReference type="Gene3D" id="3.30.9.10">
    <property type="entry name" value="D-Amino Acid Oxidase, subunit A, domain 2"/>
    <property type="match status" value="1"/>
</dbReference>
<dbReference type="Gene3D" id="3.50.50.60">
    <property type="entry name" value="FAD/NAD(P)-binding domain"/>
    <property type="match status" value="1"/>
</dbReference>
<dbReference type="InterPro" id="IPR031656">
    <property type="entry name" value="DAO_C"/>
</dbReference>
<dbReference type="InterPro" id="IPR038299">
    <property type="entry name" value="DAO_C_sf"/>
</dbReference>
<dbReference type="InterPro" id="IPR006076">
    <property type="entry name" value="FAD-dep_OxRdtase"/>
</dbReference>
<dbReference type="InterPro" id="IPR036188">
    <property type="entry name" value="FAD/NAD-bd_sf"/>
</dbReference>
<dbReference type="InterPro" id="IPR000447">
    <property type="entry name" value="G3P_DH_FAD-dep"/>
</dbReference>
<dbReference type="PANTHER" id="PTHR11985">
    <property type="entry name" value="GLYCEROL-3-PHOSPHATE DEHYDROGENASE"/>
    <property type="match status" value="1"/>
</dbReference>
<dbReference type="PANTHER" id="PTHR11985:SF15">
    <property type="entry name" value="GLYCEROL-3-PHOSPHATE DEHYDROGENASE, MITOCHONDRIAL"/>
    <property type="match status" value="1"/>
</dbReference>
<dbReference type="Pfam" id="PF01266">
    <property type="entry name" value="DAO"/>
    <property type="match status" value="1"/>
</dbReference>
<dbReference type="Pfam" id="PF16901">
    <property type="entry name" value="DAO_C"/>
    <property type="match status" value="1"/>
</dbReference>
<dbReference type="PRINTS" id="PR01001">
    <property type="entry name" value="FADG3PDH"/>
</dbReference>
<dbReference type="SUPFAM" id="SSF54373">
    <property type="entry name" value="FAD-linked reductases, C-terminal domain"/>
    <property type="match status" value="1"/>
</dbReference>
<dbReference type="SUPFAM" id="SSF51905">
    <property type="entry name" value="FAD/NAD(P)-binding domain"/>
    <property type="match status" value="1"/>
</dbReference>
<dbReference type="PROSITE" id="PS00977">
    <property type="entry name" value="FAD_G3PDH_1"/>
    <property type="match status" value="1"/>
</dbReference>
<sequence length="614" mass="68640">MLVALVVLFLSVFMAMKFLYKRIFVASRLKMIEKPSEDWEPASREAMIERLRSEVFDLVVVGGGSTGAGCALDGATRGLKVALVDAGDFGSGTSSKSTKLVHGGVRYLAKAVSNLDWSQYKLVWQALGERTTMFEISPYLTNSIKIMVPIYSKILIPYYYVGLKLYDWISGFKSLGKSYFIDRKEAVDAFPHINKKNLCGAMVYFDGQQDDARNNVMIVMTAVCHGAVAANHVSARSLMIEGGKIVGVRCRDEITGSEIEIRGTGVINSTGNLADDLRRMDDADAREIIVQSSGTHIVIPKEYAPKEMGFLDPLTSDNRIAFFMPWMGKTIVGSTDIKTKTELSPSPTEEDLEFLIHEVQAYTSMHPKLTRDEVSAVWTGIRPLVKDPDVSDTGSIVRKHFVRIEKNGLLTVTGGKWTIYRKMAEDAIDLAISAFSLKPSGPCVTKYVRILGGDGYTKNTWASIQKELGVPKNVAERLARSYGTRALRLSSYIKKNRKKVLSVKYSYLIEEVEYCIDNEMAVKVCDVLCNRLMIGLMDVKEAYQCIDKVLGVFKKKHGWDADRCNREEADAIRMLDKYGLQILRGCGQDASSLQMECPEEKRHRGERRLPPQEK</sequence>
<gene>
    <name type="ordered locus">ECU10_0870</name>
</gene>
<feature type="chain" id="PRO_0000383045" description="Probable glycerol-3-phosphate dehydrogenase">
    <location>
        <begin position="1"/>
        <end position="614"/>
    </location>
</feature>
<feature type="region of interest" description="Disordered" evidence="3">
    <location>
        <begin position="595"/>
        <end position="614"/>
    </location>
</feature>
<feature type="compositionally biased region" description="Basic and acidic residues" evidence="3">
    <location>
        <begin position="598"/>
        <end position="614"/>
    </location>
</feature>
<feature type="binding site" evidence="2">
    <location>
        <begin position="57"/>
        <end position="85"/>
    </location>
    <ligand>
        <name>FAD</name>
        <dbReference type="ChEBI" id="CHEBI:57692"/>
    </ligand>
</feature>